<keyword id="KW-0072">Autophagy</keyword>
<keyword id="KW-1003">Cell membrane</keyword>
<keyword id="KW-0968">Cytoplasmic vesicle</keyword>
<keyword id="KW-0967">Endosome</keyword>
<keyword id="KW-0342">GTP-binding</keyword>
<keyword id="KW-0378">Hydrolase</keyword>
<keyword id="KW-0449">Lipoprotein</keyword>
<keyword id="KW-0458">Lysosome</keyword>
<keyword id="KW-0460">Magnesium</keyword>
<keyword id="KW-0472">Membrane</keyword>
<keyword id="KW-0479">Metal-binding</keyword>
<keyword id="KW-0488">Methylation</keyword>
<keyword id="KW-0547">Nucleotide-binding</keyword>
<keyword id="KW-0636">Prenylation</keyword>
<keyword id="KW-0653">Protein transport</keyword>
<keyword id="KW-1185">Reference proteome</keyword>
<keyword id="KW-0813">Transport</keyword>
<dbReference type="EC" id="3.6.5.2" evidence="2"/>
<dbReference type="EMBL" id="AK049038">
    <property type="protein sequence ID" value="BAC33522.1"/>
    <property type="molecule type" value="mRNA"/>
</dbReference>
<dbReference type="EMBL" id="AK053487">
    <property type="protein sequence ID" value="BAC35399.1"/>
    <property type="molecule type" value="mRNA"/>
</dbReference>
<dbReference type="EMBL" id="BC049787">
    <property type="protein sequence ID" value="AAH49787.1"/>
    <property type="molecule type" value="mRNA"/>
</dbReference>
<dbReference type="CCDS" id="CCDS23185.1"/>
<dbReference type="RefSeq" id="NP_780771.1">
    <property type="nucleotide sequence ID" value="NM_175562.3"/>
</dbReference>
<dbReference type="SMR" id="Q8BHD0"/>
<dbReference type="BioGRID" id="234773">
    <property type="interactions" value="1"/>
</dbReference>
<dbReference type="FunCoup" id="Q8BHD0">
    <property type="interactions" value="576"/>
</dbReference>
<dbReference type="IntAct" id="Q8BHD0">
    <property type="interactions" value="2"/>
</dbReference>
<dbReference type="STRING" id="10090.ENSMUSP00000063804"/>
<dbReference type="GlyGen" id="Q8BHD0">
    <property type="glycosylation" value="1 site, 1 O-linked glycan (1 site)"/>
</dbReference>
<dbReference type="iPTMnet" id="Q8BHD0"/>
<dbReference type="PhosphoSitePlus" id="Q8BHD0"/>
<dbReference type="jPOST" id="Q8BHD0"/>
<dbReference type="PaxDb" id="10090-ENSMUSP00000063804"/>
<dbReference type="ProteomicsDB" id="300248"/>
<dbReference type="Pumba" id="Q8BHD0"/>
<dbReference type="Antibodypedia" id="31924">
    <property type="antibodies" value="116 antibodies from 27 providers"/>
</dbReference>
<dbReference type="DNASU" id="270160"/>
<dbReference type="Ensembl" id="ENSMUST00000068449.4">
    <property type="protein sequence ID" value="ENSMUSP00000063804.4"/>
    <property type="gene ID" value="ENSMUSG00000055069.4"/>
</dbReference>
<dbReference type="GeneID" id="270160"/>
<dbReference type="KEGG" id="mmu:270160"/>
<dbReference type="UCSC" id="uc009pmm.1">
    <property type="organism name" value="mouse"/>
</dbReference>
<dbReference type="AGR" id="MGI:2442855"/>
<dbReference type="CTD" id="270160"/>
<dbReference type="MGI" id="MGI:2442855">
    <property type="gene designation" value="Rab39"/>
</dbReference>
<dbReference type="VEuPathDB" id="HostDB:ENSMUSG00000055069"/>
<dbReference type="eggNOG" id="KOG0091">
    <property type="taxonomic scope" value="Eukaryota"/>
</dbReference>
<dbReference type="GeneTree" id="ENSGT00940000159933"/>
<dbReference type="HOGENOM" id="CLU_041217_23_1_1"/>
<dbReference type="InParanoid" id="Q8BHD0"/>
<dbReference type="OMA" id="LGEQCPC"/>
<dbReference type="OrthoDB" id="9989112at2759"/>
<dbReference type="PhylomeDB" id="Q8BHD0"/>
<dbReference type="TreeFam" id="TF300032"/>
<dbReference type="Reactome" id="R-MMU-6811438">
    <property type="pathway name" value="Intra-Golgi traffic"/>
</dbReference>
<dbReference type="Reactome" id="R-MMU-8873719">
    <property type="pathway name" value="RAB geranylgeranylation"/>
</dbReference>
<dbReference type="Reactome" id="R-MMU-8876198">
    <property type="pathway name" value="RAB GEFs exchange GTP for GDP on RABs"/>
</dbReference>
<dbReference type="BioGRID-ORCS" id="270160">
    <property type="hits" value="2 hits in 76 CRISPR screens"/>
</dbReference>
<dbReference type="ChiTaRS" id="Rab39">
    <property type="organism name" value="mouse"/>
</dbReference>
<dbReference type="PRO" id="PR:Q8BHD0"/>
<dbReference type="Proteomes" id="UP000000589">
    <property type="component" value="Chromosome 9"/>
</dbReference>
<dbReference type="RNAct" id="Q8BHD0">
    <property type="molecule type" value="protein"/>
</dbReference>
<dbReference type="Bgee" id="ENSMUSG00000055069">
    <property type="expression patterns" value="Expressed in lumbar dorsal root ganglion and 64 other cell types or tissues"/>
</dbReference>
<dbReference type="ExpressionAtlas" id="Q8BHD0">
    <property type="expression patterns" value="baseline and differential"/>
</dbReference>
<dbReference type="GO" id="GO:0120281">
    <property type="term" value="C:autolysosome membrane"/>
    <property type="evidence" value="ECO:0000250"/>
    <property type="project" value="UniProtKB"/>
</dbReference>
<dbReference type="GO" id="GO:0031902">
    <property type="term" value="C:late endosome membrane"/>
    <property type="evidence" value="ECO:0000314"/>
    <property type="project" value="UniProtKB"/>
</dbReference>
<dbReference type="GO" id="GO:0005765">
    <property type="term" value="C:lysosomal membrane"/>
    <property type="evidence" value="ECO:0000250"/>
    <property type="project" value="UniProtKB"/>
</dbReference>
<dbReference type="GO" id="GO:0045335">
    <property type="term" value="C:phagocytic vesicle"/>
    <property type="evidence" value="ECO:0000250"/>
    <property type="project" value="UniProtKB"/>
</dbReference>
<dbReference type="GO" id="GO:0030670">
    <property type="term" value="C:phagocytic vesicle membrane"/>
    <property type="evidence" value="ECO:0000314"/>
    <property type="project" value="UniProtKB"/>
</dbReference>
<dbReference type="GO" id="GO:0005886">
    <property type="term" value="C:plasma membrane"/>
    <property type="evidence" value="ECO:0007669"/>
    <property type="project" value="UniProtKB-SubCell"/>
</dbReference>
<dbReference type="GO" id="GO:0003925">
    <property type="term" value="F:G protein activity"/>
    <property type="evidence" value="ECO:0000250"/>
    <property type="project" value="UniProtKB"/>
</dbReference>
<dbReference type="GO" id="GO:0005525">
    <property type="term" value="F:GTP binding"/>
    <property type="evidence" value="ECO:0007669"/>
    <property type="project" value="UniProtKB-KW"/>
</dbReference>
<dbReference type="GO" id="GO:0061909">
    <property type="term" value="P:autophagosome-lysosome fusion"/>
    <property type="evidence" value="ECO:0000250"/>
    <property type="project" value="UniProtKB"/>
</dbReference>
<dbReference type="GO" id="GO:0090383">
    <property type="term" value="P:phagosome acidification"/>
    <property type="evidence" value="ECO:0000250"/>
    <property type="project" value="UniProtKB"/>
</dbReference>
<dbReference type="GO" id="GO:0090385">
    <property type="term" value="P:phagosome-lysosome fusion"/>
    <property type="evidence" value="ECO:0000250"/>
    <property type="project" value="UniProtKB"/>
</dbReference>
<dbReference type="GO" id="GO:0015031">
    <property type="term" value="P:protein transport"/>
    <property type="evidence" value="ECO:0007669"/>
    <property type="project" value="UniProtKB-KW"/>
</dbReference>
<dbReference type="GO" id="GO:0032482">
    <property type="term" value="P:Rab protein signal transduction"/>
    <property type="evidence" value="ECO:0007669"/>
    <property type="project" value="InterPro"/>
</dbReference>
<dbReference type="CDD" id="cd04111">
    <property type="entry name" value="Rab39"/>
    <property type="match status" value="1"/>
</dbReference>
<dbReference type="FunFam" id="3.40.50.300:FF:000358">
    <property type="entry name" value="RAB39B, member RAS oncogene family"/>
    <property type="match status" value="1"/>
</dbReference>
<dbReference type="Gene3D" id="3.40.50.300">
    <property type="entry name" value="P-loop containing nucleotide triphosphate hydrolases"/>
    <property type="match status" value="1"/>
</dbReference>
<dbReference type="InterPro" id="IPR027417">
    <property type="entry name" value="P-loop_NTPase"/>
</dbReference>
<dbReference type="InterPro" id="IPR041818">
    <property type="entry name" value="Rab39"/>
</dbReference>
<dbReference type="InterPro" id="IPR050209">
    <property type="entry name" value="Rab_GTPases_membrane_traffic"/>
</dbReference>
<dbReference type="InterPro" id="IPR005225">
    <property type="entry name" value="Small_GTP-bd"/>
</dbReference>
<dbReference type="InterPro" id="IPR001806">
    <property type="entry name" value="Small_GTPase"/>
</dbReference>
<dbReference type="NCBIfam" id="TIGR00231">
    <property type="entry name" value="small_GTP"/>
    <property type="match status" value="1"/>
</dbReference>
<dbReference type="PANTHER" id="PTHR47979">
    <property type="entry name" value="DRAB11-RELATED"/>
    <property type="match status" value="1"/>
</dbReference>
<dbReference type="Pfam" id="PF00071">
    <property type="entry name" value="Ras"/>
    <property type="match status" value="1"/>
</dbReference>
<dbReference type="PRINTS" id="PR00449">
    <property type="entry name" value="RASTRNSFRMNG"/>
</dbReference>
<dbReference type="SMART" id="SM00175">
    <property type="entry name" value="RAB"/>
    <property type="match status" value="1"/>
</dbReference>
<dbReference type="SMART" id="SM00176">
    <property type="entry name" value="RAN"/>
    <property type="match status" value="1"/>
</dbReference>
<dbReference type="SMART" id="SM00173">
    <property type="entry name" value="RAS"/>
    <property type="match status" value="1"/>
</dbReference>
<dbReference type="SMART" id="SM00174">
    <property type="entry name" value="RHO"/>
    <property type="match status" value="1"/>
</dbReference>
<dbReference type="SUPFAM" id="SSF52540">
    <property type="entry name" value="P-loop containing nucleoside triphosphate hydrolases"/>
    <property type="match status" value="1"/>
</dbReference>
<dbReference type="PROSITE" id="PS51419">
    <property type="entry name" value="RAB"/>
    <property type="match status" value="1"/>
</dbReference>
<gene>
    <name evidence="10" type="primary">Rab39a</name>
    <name type="synonym">Rab39</name>
</gene>
<comment type="function">
    <text evidence="3 7 8">The small GTPases Rab are key regulators of intracellular membrane trafficking, from the formation of transport vesicles to their fusion with membranes. Rabs cycle between an inactive GDP-bound form and an active GTP-bound form that is able to recruit to membranes different sets of downstream effectors directly responsible for vesicle formation, movement, tethering and fusion (By similarity). RAB39A regulates autophagosome-lysosome fusion via recruitment of the HOPS endosomal tethering complex onto lysosomes; this process involves lysosomal RAB39A and autophagosomal RAB2A recruitment of HOPS subcomplexes VPS41-VPS16-VPS18-VPS33A and VPS39-VPS11, respectively, which assemble into a functional complex to mediate membrane tethering and SNAREs-driven membrane fusion (By similarity). Also negatively regulates lipopolysaccharide (LPS)-induced autophagosome formation in macrophages, possibly by implicating PI3K (By similarity). Promotes the delivery of MHC-I molecules from the ER to phagosomes and the generation of peptide-loaded MHC-I complexes in phagosomes, thus enhancing antigen cross-presentation by dendritic cells (PubMed:31821587). Plays a role in the maturation and acidification of phagosomes that engulf pathogens, such as S.aureus and M.tuberculosis. Plays a role in the fusion of phagosomes with lysosomes (By similarity). May be involved in multiple neurite formation (PubMed:23624502).</text>
</comment>
<comment type="catalytic activity">
    <reaction evidence="2">
        <text>GTP + H2O = GDP + phosphate + H(+)</text>
        <dbReference type="Rhea" id="RHEA:19669"/>
        <dbReference type="ChEBI" id="CHEBI:15377"/>
        <dbReference type="ChEBI" id="CHEBI:15378"/>
        <dbReference type="ChEBI" id="CHEBI:37565"/>
        <dbReference type="ChEBI" id="CHEBI:43474"/>
        <dbReference type="ChEBI" id="CHEBI:58189"/>
        <dbReference type="EC" id="3.6.5.2"/>
    </reaction>
    <physiologicalReaction direction="left-to-right" evidence="2">
        <dbReference type="Rhea" id="RHEA:19670"/>
    </physiologicalReaction>
</comment>
<comment type="cofactor">
    <cofactor evidence="4">
        <name>Mg(2+)</name>
        <dbReference type="ChEBI" id="CHEBI:18420"/>
    </cofactor>
</comment>
<comment type="activity regulation">
    <text evidence="3 9">Regulated by guanine nucleotide exchange factors (GEFs) including c9Orf72, which promote the exchange of bound GDP for free GTP (By similarity). Regulated by GTPase activating proteins (GAPs) which increase the GTP hydrolysis activity (Probable). Inhibited by GDP dissociation inhibitors (GDIs) (Probable).</text>
</comment>
<comment type="subunit">
    <text evidence="3 6 7">Interacts (GDP-bound) with C9orf72; C9orf72 acts as a GEF for RAB39A (By similarity). Interacts (GTP-bound) with HOPS complex components VPS39 and VPS41, and STX17; interaction between HOPS components and RAB39A contributes to obtaining a functional HOPS complex that promotes membrane fusion driven by STX17-SNAP29-VAMP8 (By similarity). Interacts with BECN1. Probably associates with the PI3K (PI3KC3/PI3K-III/class III phosphatidylinositol 3-kinase) complex (By similarity). Interacts with UACA. Interacts with isoform a of RASSF1 (PubMed:23294242). Does not interact with isoform c of RASSF1 (PubMed:23294242).</text>
</comment>
<comment type="interaction">
    <interactant intactId="EBI-10767908">
        <id>Q8BHD0</id>
    </interactant>
    <interactant intactId="EBI-10767725">
        <id>Q8CGB3-3</id>
        <label>Uaca</label>
    </interactant>
    <organismsDiffer>false</organismsDiffer>
    <experiments>3</experiments>
</comment>
<comment type="subcellular location">
    <subcellularLocation>
        <location evidence="9">Cell membrane</location>
        <topology evidence="9">Lipid-anchor</topology>
        <orientation evidence="9">Cytoplasmic side</orientation>
    </subcellularLocation>
    <subcellularLocation>
        <location evidence="8">Cytoplasmic vesicle</location>
        <location evidence="8">Phagosome membrane</location>
        <topology evidence="9">Lipid-anchor</topology>
        <orientation evidence="9">Cytoplasmic side</orientation>
    </subcellularLocation>
    <subcellularLocation>
        <location evidence="8">Late endosome membrane</location>
    </subcellularLocation>
    <subcellularLocation>
        <location evidence="3">Lysosome membrane</location>
    </subcellularLocation>
    <subcellularLocation>
        <location evidence="3">Autolysosome membrane</location>
    </subcellularLocation>
    <text evidence="3 8">Recruited to phagosomes containing S.aureus or Mycobacterium. Majorly localized on lysosomes under basal conditions (By similarity). Majorly localized on autophagosomes/autolysosomes under autophagy-induced conditions (By similarity). Colocalized with VPS39 and VPS41 on lysosomes or autolysosomes (By similarity). Colocalized with STX17 on autolysosomes in autophagy-induced conditions (By similarity). Localized (GTP-bound) to phagosomes in dendritic cells; shuttles vesicles from the ER-Golgi to the phagosome (PubMed:31821587).</text>
</comment>
<comment type="domain">
    <text evidence="4">Switch I, switch II and the interswitch regions are characteristic of Rab GTPases and mediate the interactions with Rab downstream effectors. The switch regions undergo conformational changes upon nucleotide binding which drive interaction with specific sets of effector proteins, with most effectors only binding to GTP-bound Rab.</text>
</comment>
<comment type="PTM">
    <text evidence="3">Prenylated. Prenylation is required for association with cellular membranes.</text>
</comment>
<comment type="similarity">
    <text evidence="9">Belongs to the small GTPase superfamily. Rab family.</text>
</comment>
<reference key="1">
    <citation type="journal article" date="2005" name="Science">
        <title>The transcriptional landscape of the mammalian genome.</title>
        <authorList>
            <person name="Carninci P."/>
            <person name="Kasukawa T."/>
            <person name="Katayama S."/>
            <person name="Gough J."/>
            <person name="Frith M.C."/>
            <person name="Maeda N."/>
            <person name="Oyama R."/>
            <person name="Ravasi T."/>
            <person name="Lenhard B."/>
            <person name="Wells C."/>
            <person name="Kodzius R."/>
            <person name="Shimokawa K."/>
            <person name="Bajic V.B."/>
            <person name="Brenner S.E."/>
            <person name="Batalov S."/>
            <person name="Forrest A.R."/>
            <person name="Zavolan M."/>
            <person name="Davis M.J."/>
            <person name="Wilming L.G."/>
            <person name="Aidinis V."/>
            <person name="Allen J.E."/>
            <person name="Ambesi-Impiombato A."/>
            <person name="Apweiler R."/>
            <person name="Aturaliya R.N."/>
            <person name="Bailey T.L."/>
            <person name="Bansal M."/>
            <person name="Baxter L."/>
            <person name="Beisel K.W."/>
            <person name="Bersano T."/>
            <person name="Bono H."/>
            <person name="Chalk A.M."/>
            <person name="Chiu K.P."/>
            <person name="Choudhary V."/>
            <person name="Christoffels A."/>
            <person name="Clutterbuck D.R."/>
            <person name="Crowe M.L."/>
            <person name="Dalla E."/>
            <person name="Dalrymple B.P."/>
            <person name="de Bono B."/>
            <person name="Della Gatta G."/>
            <person name="di Bernardo D."/>
            <person name="Down T."/>
            <person name="Engstrom P."/>
            <person name="Fagiolini M."/>
            <person name="Faulkner G."/>
            <person name="Fletcher C.F."/>
            <person name="Fukushima T."/>
            <person name="Furuno M."/>
            <person name="Futaki S."/>
            <person name="Gariboldi M."/>
            <person name="Georgii-Hemming P."/>
            <person name="Gingeras T.R."/>
            <person name="Gojobori T."/>
            <person name="Green R.E."/>
            <person name="Gustincich S."/>
            <person name="Harbers M."/>
            <person name="Hayashi Y."/>
            <person name="Hensch T.K."/>
            <person name="Hirokawa N."/>
            <person name="Hill D."/>
            <person name="Huminiecki L."/>
            <person name="Iacono M."/>
            <person name="Ikeo K."/>
            <person name="Iwama A."/>
            <person name="Ishikawa T."/>
            <person name="Jakt M."/>
            <person name="Kanapin A."/>
            <person name="Katoh M."/>
            <person name="Kawasawa Y."/>
            <person name="Kelso J."/>
            <person name="Kitamura H."/>
            <person name="Kitano H."/>
            <person name="Kollias G."/>
            <person name="Krishnan S.P."/>
            <person name="Kruger A."/>
            <person name="Kummerfeld S.K."/>
            <person name="Kurochkin I.V."/>
            <person name="Lareau L.F."/>
            <person name="Lazarevic D."/>
            <person name="Lipovich L."/>
            <person name="Liu J."/>
            <person name="Liuni S."/>
            <person name="McWilliam S."/>
            <person name="Madan Babu M."/>
            <person name="Madera M."/>
            <person name="Marchionni L."/>
            <person name="Matsuda H."/>
            <person name="Matsuzawa S."/>
            <person name="Miki H."/>
            <person name="Mignone F."/>
            <person name="Miyake S."/>
            <person name="Morris K."/>
            <person name="Mottagui-Tabar S."/>
            <person name="Mulder N."/>
            <person name="Nakano N."/>
            <person name="Nakauchi H."/>
            <person name="Ng P."/>
            <person name="Nilsson R."/>
            <person name="Nishiguchi S."/>
            <person name="Nishikawa S."/>
            <person name="Nori F."/>
            <person name="Ohara O."/>
            <person name="Okazaki Y."/>
            <person name="Orlando V."/>
            <person name="Pang K.C."/>
            <person name="Pavan W.J."/>
            <person name="Pavesi G."/>
            <person name="Pesole G."/>
            <person name="Petrovsky N."/>
            <person name="Piazza S."/>
            <person name="Reed J."/>
            <person name="Reid J.F."/>
            <person name="Ring B.Z."/>
            <person name="Ringwald M."/>
            <person name="Rost B."/>
            <person name="Ruan Y."/>
            <person name="Salzberg S.L."/>
            <person name="Sandelin A."/>
            <person name="Schneider C."/>
            <person name="Schoenbach C."/>
            <person name="Sekiguchi K."/>
            <person name="Semple C.A."/>
            <person name="Seno S."/>
            <person name="Sessa L."/>
            <person name="Sheng Y."/>
            <person name="Shibata Y."/>
            <person name="Shimada H."/>
            <person name="Shimada K."/>
            <person name="Silva D."/>
            <person name="Sinclair B."/>
            <person name="Sperling S."/>
            <person name="Stupka E."/>
            <person name="Sugiura K."/>
            <person name="Sultana R."/>
            <person name="Takenaka Y."/>
            <person name="Taki K."/>
            <person name="Tammoja K."/>
            <person name="Tan S.L."/>
            <person name="Tang S."/>
            <person name="Taylor M.S."/>
            <person name="Tegner J."/>
            <person name="Teichmann S.A."/>
            <person name="Ueda H.R."/>
            <person name="van Nimwegen E."/>
            <person name="Verardo R."/>
            <person name="Wei C.L."/>
            <person name="Yagi K."/>
            <person name="Yamanishi H."/>
            <person name="Zabarovsky E."/>
            <person name="Zhu S."/>
            <person name="Zimmer A."/>
            <person name="Hide W."/>
            <person name="Bult C."/>
            <person name="Grimmond S.M."/>
            <person name="Teasdale R.D."/>
            <person name="Liu E.T."/>
            <person name="Brusic V."/>
            <person name="Quackenbush J."/>
            <person name="Wahlestedt C."/>
            <person name="Mattick J.S."/>
            <person name="Hume D.A."/>
            <person name="Kai C."/>
            <person name="Sasaki D."/>
            <person name="Tomaru Y."/>
            <person name="Fukuda S."/>
            <person name="Kanamori-Katayama M."/>
            <person name="Suzuki M."/>
            <person name="Aoki J."/>
            <person name="Arakawa T."/>
            <person name="Iida J."/>
            <person name="Imamura K."/>
            <person name="Itoh M."/>
            <person name="Kato T."/>
            <person name="Kawaji H."/>
            <person name="Kawagashira N."/>
            <person name="Kawashima T."/>
            <person name="Kojima M."/>
            <person name="Kondo S."/>
            <person name="Konno H."/>
            <person name="Nakano K."/>
            <person name="Ninomiya N."/>
            <person name="Nishio T."/>
            <person name="Okada M."/>
            <person name="Plessy C."/>
            <person name="Shibata K."/>
            <person name="Shiraki T."/>
            <person name="Suzuki S."/>
            <person name="Tagami M."/>
            <person name="Waki K."/>
            <person name="Watahiki A."/>
            <person name="Okamura-Oho Y."/>
            <person name="Suzuki H."/>
            <person name="Kawai J."/>
            <person name="Hayashizaki Y."/>
        </authorList>
    </citation>
    <scope>NUCLEOTIDE SEQUENCE [LARGE SCALE MRNA]</scope>
    <source>
        <strain>C57BL/6J</strain>
        <tissue>Cerebellum</tissue>
        <tissue>Eye</tissue>
    </source>
</reference>
<reference key="2">
    <citation type="journal article" date="2004" name="Genome Res.">
        <title>The status, quality, and expansion of the NIH full-length cDNA project: the Mammalian Gene Collection (MGC).</title>
        <authorList>
            <consortium name="The MGC Project Team"/>
        </authorList>
    </citation>
    <scope>NUCLEOTIDE SEQUENCE [LARGE SCALE MRNA]</scope>
    <source>
        <tissue>Limb</tissue>
    </source>
</reference>
<reference key="3">
    <citation type="journal article" date="2013" name="Biochem. Biophys. Res. Commun.">
        <title>Small GTPase Rab39A interacts with UACA and regulates the retinoic acid-induced neurite morphology of Neuro2A cells.</title>
        <authorList>
            <person name="Mori Y."/>
            <person name="Matsui T."/>
            <person name="Omote D."/>
            <person name="Fukuda M."/>
        </authorList>
    </citation>
    <scope>FUNCTION</scope>
    <scope>INTERACTION WITH UACA</scope>
</reference>
<reference key="4">
    <citation type="journal article" date="2013" name="Genes Cells">
        <title>C. elegans Rassf homolog, rasf-1, is functionally associated with rab-39 Rab GTPase in oxidative stress response.</title>
        <authorList>
            <person name="Takenaka M."/>
            <person name="Inoue H."/>
            <person name="Takeshima A."/>
            <person name="Kakura T."/>
            <person name="Hori T."/>
        </authorList>
    </citation>
    <scope>INTERACTION WITH RASSF1</scope>
</reference>
<reference key="5">
    <citation type="journal article" date="2020" name="EMBO J.">
        <title>The GTPase Rab39a promotes phagosome maturation into MHC-I antigen-presenting compartments.</title>
        <authorList>
            <person name="Cruz F.M."/>
            <person name="Colbert J.D."/>
            <person name="Rock K.L."/>
        </authorList>
    </citation>
    <scope>FUNCTION</scope>
    <scope>SUBCELLULAR LOCATION</scope>
</reference>
<sequence length="217" mass="24978">METIWIYQFRLIVIGDSTVGKSCLLHRFTQGRFPGLHSPACDPTVGVDFFSRLLEIEPGKRIKLQLWDTAGQERFRSITRSYYRNSVGGFLVFDITNRRSFEHVKDWLEEAKMHVQPFQIVFLLVGHKCDLASQRQVSREEAERLSTDCGMKYIETSAKDATNVEESFTILTRDIYELIKKGEICIQDGWEGVKSGFVPNTVHSSEEAVKPRKECFC</sequence>
<evidence type="ECO:0000250" key="1">
    <source>
        <dbReference type="UniProtKB" id="P20336"/>
    </source>
</evidence>
<evidence type="ECO:0000250" key="2">
    <source>
        <dbReference type="UniProtKB" id="P62820"/>
    </source>
</evidence>
<evidence type="ECO:0000250" key="3">
    <source>
        <dbReference type="UniProtKB" id="Q14964"/>
    </source>
</evidence>
<evidence type="ECO:0000250" key="4">
    <source>
        <dbReference type="UniProtKB" id="Q96DA2"/>
    </source>
</evidence>
<evidence type="ECO:0000255" key="5">
    <source>
        <dbReference type="PROSITE-ProRule" id="PRU00753"/>
    </source>
</evidence>
<evidence type="ECO:0000269" key="6">
    <source>
    </source>
</evidence>
<evidence type="ECO:0000269" key="7">
    <source>
    </source>
</evidence>
<evidence type="ECO:0000269" key="8">
    <source>
    </source>
</evidence>
<evidence type="ECO:0000305" key="9"/>
<evidence type="ECO:0000312" key="10">
    <source>
        <dbReference type="MGI" id="MGI:2442855"/>
    </source>
</evidence>
<feature type="chain" id="PRO_0000121254" description="Ras-related protein Rab-39A">
    <location>
        <begin position="1"/>
        <end position="217"/>
    </location>
</feature>
<feature type="region of interest" description="Switch-I" evidence="5">
    <location>
        <begin position="39"/>
        <end position="47"/>
    </location>
</feature>
<feature type="region of interest" description="Switch-II" evidence="5">
    <location>
        <begin position="71"/>
        <end position="87"/>
    </location>
</feature>
<feature type="binding site" evidence="4">
    <location>
        <position position="17"/>
    </location>
    <ligand>
        <name>GTP</name>
        <dbReference type="ChEBI" id="CHEBI:37565"/>
    </ligand>
</feature>
<feature type="binding site" evidence="4">
    <location>
        <position position="20"/>
    </location>
    <ligand>
        <name>GTP</name>
        <dbReference type="ChEBI" id="CHEBI:37565"/>
    </ligand>
</feature>
<feature type="binding site" evidence="4">
    <location>
        <position position="21"/>
    </location>
    <ligand>
        <name>GTP</name>
        <dbReference type="ChEBI" id="CHEBI:37565"/>
    </ligand>
</feature>
<feature type="binding site" evidence="4">
    <location>
        <position position="22"/>
    </location>
    <ligand>
        <name>GTP</name>
        <dbReference type="ChEBI" id="CHEBI:37565"/>
    </ligand>
</feature>
<feature type="binding site" evidence="4">
    <location>
        <position position="22"/>
    </location>
    <ligand>
        <name>Mg(2+)</name>
        <dbReference type="ChEBI" id="CHEBI:18420"/>
    </ligand>
</feature>
<feature type="binding site" evidence="4">
    <location>
        <position position="23"/>
    </location>
    <ligand>
        <name>GTP</name>
        <dbReference type="ChEBI" id="CHEBI:37565"/>
    </ligand>
</feature>
<feature type="binding site" evidence="4">
    <location>
        <position position="44"/>
    </location>
    <ligand>
        <name>GTP</name>
        <dbReference type="ChEBI" id="CHEBI:37565"/>
    </ligand>
</feature>
<feature type="binding site" evidence="4">
    <location>
        <position position="44"/>
    </location>
    <ligand>
        <name>Mg(2+)</name>
        <dbReference type="ChEBI" id="CHEBI:18420"/>
    </ligand>
</feature>
<feature type="binding site" evidence="2 4">
    <location>
        <position position="68"/>
    </location>
    <ligand>
        <name>Mg(2+)</name>
        <dbReference type="ChEBI" id="CHEBI:18420"/>
    </ligand>
</feature>
<feature type="binding site" evidence="4">
    <location>
        <position position="71"/>
    </location>
    <ligand>
        <name>GTP</name>
        <dbReference type="ChEBI" id="CHEBI:37565"/>
    </ligand>
</feature>
<feature type="binding site" evidence="4">
    <location>
        <position position="127"/>
    </location>
    <ligand>
        <name>GTP</name>
        <dbReference type="ChEBI" id="CHEBI:37565"/>
    </ligand>
</feature>
<feature type="binding site" evidence="4">
    <location>
        <position position="128"/>
    </location>
    <ligand>
        <name>GTP</name>
        <dbReference type="ChEBI" id="CHEBI:37565"/>
    </ligand>
</feature>
<feature type="binding site" evidence="4">
    <location>
        <position position="130"/>
    </location>
    <ligand>
        <name>GTP</name>
        <dbReference type="ChEBI" id="CHEBI:37565"/>
    </ligand>
</feature>
<feature type="binding site" evidence="4">
    <location>
        <position position="158"/>
    </location>
    <ligand>
        <name>GTP</name>
        <dbReference type="ChEBI" id="CHEBI:37565"/>
    </ligand>
</feature>
<feature type="binding site" evidence="4">
    <location>
        <position position="159"/>
    </location>
    <ligand>
        <name>GTP</name>
        <dbReference type="ChEBI" id="CHEBI:37565"/>
    </ligand>
</feature>
<feature type="modified residue" description="Cysteine methyl ester" evidence="1">
    <location>
        <position position="217"/>
    </location>
</feature>
<feature type="lipid moiety-binding region" description="S-geranylgeranyl cysteine" evidence="1">
    <location>
        <position position="215"/>
    </location>
</feature>
<feature type="lipid moiety-binding region" description="S-geranylgeranyl cysteine" evidence="1">
    <location>
        <position position="217"/>
    </location>
</feature>
<name>RB39A_MOUSE</name>
<accession>Q8BHD0</accession>
<protein>
    <recommendedName>
        <fullName>Ras-related protein Rab-39A</fullName>
        <shortName>Rab-39</shortName>
        <ecNumber evidence="2">3.6.5.2</ecNumber>
    </recommendedName>
</protein>
<organism>
    <name type="scientific">Mus musculus</name>
    <name type="common">Mouse</name>
    <dbReference type="NCBI Taxonomy" id="10090"/>
    <lineage>
        <taxon>Eukaryota</taxon>
        <taxon>Metazoa</taxon>
        <taxon>Chordata</taxon>
        <taxon>Craniata</taxon>
        <taxon>Vertebrata</taxon>
        <taxon>Euteleostomi</taxon>
        <taxon>Mammalia</taxon>
        <taxon>Eutheria</taxon>
        <taxon>Euarchontoglires</taxon>
        <taxon>Glires</taxon>
        <taxon>Rodentia</taxon>
        <taxon>Myomorpha</taxon>
        <taxon>Muroidea</taxon>
        <taxon>Muridae</taxon>
        <taxon>Murinae</taxon>
        <taxon>Mus</taxon>
        <taxon>Mus</taxon>
    </lineage>
</organism>
<proteinExistence type="evidence at protein level"/>